<sequence>MYGPKDHGWIEVVAGPMYSGKTEELIRRIRRAEIAKQKVQVFKPEIDNRYSKQDVVSHAGDKIQSVPVKSSKEILEKLLDDTDVIGIDEAQFFDDFLVEIVSKIANNNRRVICAGLDMDFKGEPFGPMPKLMAIAEFVDKIQAVCMVCNNPATRTQRLINGKPAKKSDPVVLIGAQESYEARCRKCHRVPR</sequence>
<evidence type="ECO:0000255" key="1">
    <source>
        <dbReference type="HAMAP-Rule" id="MF_00124"/>
    </source>
</evidence>
<proteinExistence type="inferred from homology"/>
<dbReference type="EC" id="2.7.1.21" evidence="1"/>
<dbReference type="EMBL" id="CP000726">
    <property type="protein sequence ID" value="ABS33395.1"/>
    <property type="molecule type" value="Genomic_DNA"/>
</dbReference>
<dbReference type="RefSeq" id="WP_003405033.1">
    <property type="nucleotide sequence ID" value="NC_009697.1"/>
</dbReference>
<dbReference type="SMR" id="A7FQF9"/>
<dbReference type="KEGG" id="cba:CLB_0172"/>
<dbReference type="HOGENOM" id="CLU_064400_3_0_9"/>
<dbReference type="GO" id="GO:0005829">
    <property type="term" value="C:cytosol"/>
    <property type="evidence" value="ECO:0007669"/>
    <property type="project" value="TreeGrafter"/>
</dbReference>
<dbReference type="GO" id="GO:0005524">
    <property type="term" value="F:ATP binding"/>
    <property type="evidence" value="ECO:0007669"/>
    <property type="project" value="UniProtKB-UniRule"/>
</dbReference>
<dbReference type="GO" id="GO:0004797">
    <property type="term" value="F:thymidine kinase activity"/>
    <property type="evidence" value="ECO:0007669"/>
    <property type="project" value="UniProtKB-UniRule"/>
</dbReference>
<dbReference type="GO" id="GO:0008270">
    <property type="term" value="F:zinc ion binding"/>
    <property type="evidence" value="ECO:0007669"/>
    <property type="project" value="UniProtKB-UniRule"/>
</dbReference>
<dbReference type="GO" id="GO:0071897">
    <property type="term" value="P:DNA biosynthetic process"/>
    <property type="evidence" value="ECO:0007669"/>
    <property type="project" value="UniProtKB-KW"/>
</dbReference>
<dbReference type="GO" id="GO:0046104">
    <property type="term" value="P:thymidine metabolic process"/>
    <property type="evidence" value="ECO:0007669"/>
    <property type="project" value="TreeGrafter"/>
</dbReference>
<dbReference type="FunFam" id="3.30.60.20:FF:000026">
    <property type="entry name" value="Thymidine kinase"/>
    <property type="match status" value="1"/>
</dbReference>
<dbReference type="FunFam" id="3.40.50.300:FF:000384">
    <property type="entry name" value="Thymidine kinase"/>
    <property type="match status" value="1"/>
</dbReference>
<dbReference type="Gene3D" id="3.30.60.20">
    <property type="match status" value="1"/>
</dbReference>
<dbReference type="Gene3D" id="3.40.50.300">
    <property type="entry name" value="P-loop containing nucleotide triphosphate hydrolases"/>
    <property type="match status" value="1"/>
</dbReference>
<dbReference type="HAMAP" id="MF_00124">
    <property type="entry name" value="Thymidine_kinase"/>
    <property type="match status" value="1"/>
</dbReference>
<dbReference type="InterPro" id="IPR027417">
    <property type="entry name" value="P-loop_NTPase"/>
</dbReference>
<dbReference type="InterPro" id="IPR001267">
    <property type="entry name" value="Thymidine_kinase"/>
</dbReference>
<dbReference type="InterPro" id="IPR020633">
    <property type="entry name" value="Thymidine_kinase_CS"/>
</dbReference>
<dbReference type="NCBIfam" id="NF003296">
    <property type="entry name" value="PRK04296.1-1"/>
    <property type="match status" value="1"/>
</dbReference>
<dbReference type="PANTHER" id="PTHR11441">
    <property type="entry name" value="THYMIDINE KINASE"/>
    <property type="match status" value="1"/>
</dbReference>
<dbReference type="PANTHER" id="PTHR11441:SF0">
    <property type="entry name" value="THYMIDINE KINASE, CYTOSOLIC"/>
    <property type="match status" value="1"/>
</dbReference>
<dbReference type="Pfam" id="PF00265">
    <property type="entry name" value="TK"/>
    <property type="match status" value="1"/>
</dbReference>
<dbReference type="PIRSF" id="PIRSF035805">
    <property type="entry name" value="TK_cell"/>
    <property type="match status" value="1"/>
</dbReference>
<dbReference type="SUPFAM" id="SSF57716">
    <property type="entry name" value="Glucocorticoid receptor-like (DNA-binding domain)"/>
    <property type="match status" value="1"/>
</dbReference>
<dbReference type="SUPFAM" id="SSF52540">
    <property type="entry name" value="P-loop containing nucleoside triphosphate hydrolases"/>
    <property type="match status" value="1"/>
</dbReference>
<dbReference type="PROSITE" id="PS00603">
    <property type="entry name" value="TK_CELLULAR_TYPE"/>
    <property type="match status" value="1"/>
</dbReference>
<feature type="chain" id="PRO_1000018152" description="Thymidine kinase">
    <location>
        <begin position="1"/>
        <end position="191"/>
    </location>
</feature>
<feature type="active site" description="Proton acceptor" evidence="1">
    <location>
        <position position="89"/>
    </location>
</feature>
<feature type="binding site" evidence="1">
    <location>
        <begin position="15"/>
        <end position="22"/>
    </location>
    <ligand>
        <name>ATP</name>
        <dbReference type="ChEBI" id="CHEBI:30616"/>
    </ligand>
</feature>
<feature type="binding site" evidence="1">
    <location>
        <begin position="88"/>
        <end position="91"/>
    </location>
    <ligand>
        <name>ATP</name>
        <dbReference type="ChEBI" id="CHEBI:30616"/>
    </ligand>
</feature>
<feature type="binding site" evidence="1">
    <location>
        <position position="145"/>
    </location>
    <ligand>
        <name>Zn(2+)</name>
        <dbReference type="ChEBI" id="CHEBI:29105"/>
    </ligand>
</feature>
<feature type="binding site" evidence="1">
    <location>
        <position position="148"/>
    </location>
    <ligand>
        <name>Zn(2+)</name>
        <dbReference type="ChEBI" id="CHEBI:29105"/>
    </ligand>
</feature>
<feature type="binding site" evidence="1">
    <location>
        <position position="183"/>
    </location>
    <ligand>
        <name>Zn(2+)</name>
        <dbReference type="ChEBI" id="CHEBI:29105"/>
    </ligand>
</feature>
<feature type="binding site" evidence="1">
    <location>
        <position position="186"/>
    </location>
    <ligand>
        <name>Zn(2+)</name>
        <dbReference type="ChEBI" id="CHEBI:29105"/>
    </ligand>
</feature>
<organism>
    <name type="scientific">Clostridium botulinum (strain ATCC 19397 / Type A)</name>
    <dbReference type="NCBI Taxonomy" id="441770"/>
    <lineage>
        <taxon>Bacteria</taxon>
        <taxon>Bacillati</taxon>
        <taxon>Bacillota</taxon>
        <taxon>Clostridia</taxon>
        <taxon>Eubacteriales</taxon>
        <taxon>Clostridiaceae</taxon>
        <taxon>Clostridium</taxon>
    </lineage>
</organism>
<name>KITH_CLOB1</name>
<comment type="catalytic activity">
    <reaction evidence="1">
        <text>thymidine + ATP = dTMP + ADP + H(+)</text>
        <dbReference type="Rhea" id="RHEA:19129"/>
        <dbReference type="ChEBI" id="CHEBI:15378"/>
        <dbReference type="ChEBI" id="CHEBI:17748"/>
        <dbReference type="ChEBI" id="CHEBI:30616"/>
        <dbReference type="ChEBI" id="CHEBI:63528"/>
        <dbReference type="ChEBI" id="CHEBI:456216"/>
        <dbReference type="EC" id="2.7.1.21"/>
    </reaction>
</comment>
<comment type="subunit">
    <text evidence="1">Homotetramer.</text>
</comment>
<comment type="subcellular location">
    <subcellularLocation>
        <location evidence="1">Cytoplasm</location>
    </subcellularLocation>
</comment>
<comment type="similarity">
    <text evidence="1">Belongs to the thymidine kinase family.</text>
</comment>
<protein>
    <recommendedName>
        <fullName evidence="1">Thymidine kinase</fullName>
        <ecNumber evidence="1">2.7.1.21</ecNumber>
    </recommendedName>
</protein>
<keyword id="KW-0067">ATP-binding</keyword>
<keyword id="KW-0963">Cytoplasm</keyword>
<keyword id="KW-0237">DNA synthesis</keyword>
<keyword id="KW-0418">Kinase</keyword>
<keyword id="KW-0479">Metal-binding</keyword>
<keyword id="KW-0547">Nucleotide-binding</keyword>
<keyword id="KW-0808">Transferase</keyword>
<keyword id="KW-0862">Zinc</keyword>
<reference key="1">
    <citation type="journal article" date="2007" name="PLoS ONE">
        <title>Analysis of the neurotoxin complex genes in Clostridium botulinum A1-A4 and B1 strains: BoNT/A3, /Ba4 and /B1 clusters are located within plasmids.</title>
        <authorList>
            <person name="Smith T.J."/>
            <person name="Hill K.K."/>
            <person name="Foley B.T."/>
            <person name="Detter J.C."/>
            <person name="Munk A.C."/>
            <person name="Bruce D.C."/>
            <person name="Doggett N.A."/>
            <person name="Smith L.A."/>
            <person name="Marks J.D."/>
            <person name="Xie G."/>
            <person name="Brettin T.S."/>
        </authorList>
    </citation>
    <scope>NUCLEOTIDE SEQUENCE [LARGE SCALE GENOMIC DNA]</scope>
    <source>
        <strain>ATCC 19397 / Type A</strain>
    </source>
</reference>
<accession>A7FQF9</accession>
<gene>
    <name evidence="1" type="primary">tdk</name>
    <name type="ordered locus">CLB_0172</name>
</gene>